<gene>
    <name type="ordered locus">Cgl1903</name>
    <name type="ordered locus">cg2084</name>
</gene>
<accession>Q6M4B7</accession>
<accession>Q8NPB1</accession>
<organism>
    <name type="scientific">Corynebacterium glutamicum (strain ATCC 13032 / DSM 20300 / JCM 1318 / BCRC 11384 / CCUG 27702 / LMG 3730 / NBRC 12168 / NCIMB 10025 / NRRL B-2784 / 534)</name>
    <dbReference type="NCBI Taxonomy" id="196627"/>
    <lineage>
        <taxon>Bacteria</taxon>
        <taxon>Bacillati</taxon>
        <taxon>Actinomycetota</taxon>
        <taxon>Actinomycetes</taxon>
        <taxon>Mycobacteriales</taxon>
        <taxon>Corynebacteriaceae</taxon>
        <taxon>Corynebacterium</taxon>
    </lineage>
</organism>
<name>Y1903_CORGL</name>
<comment type="similarity">
    <text evidence="2">Belongs to the class I-like SAM-binding methyltransferase superfamily. RNA M5U methyltransferase family.</text>
</comment>
<keyword id="KW-0489">Methyltransferase</keyword>
<keyword id="KW-1185">Reference proteome</keyword>
<keyword id="KW-0949">S-adenosyl-L-methionine</keyword>
<keyword id="KW-0808">Transferase</keyword>
<reference key="1">
    <citation type="journal article" date="2003" name="Appl. Microbiol. Biotechnol.">
        <title>The Corynebacterium glutamicum genome: features and impacts on biotechnological processes.</title>
        <authorList>
            <person name="Ikeda M."/>
            <person name="Nakagawa S."/>
        </authorList>
    </citation>
    <scope>NUCLEOTIDE SEQUENCE [LARGE SCALE GENOMIC DNA]</scope>
    <source>
        <strain>ATCC 13032 / DSM 20300 / JCM 1318 / BCRC 11384 / CCUG 27702 / LMG 3730 / NBRC 12168 / NCIMB 10025 / NRRL B-2784 / 534</strain>
    </source>
</reference>
<reference key="2">
    <citation type="journal article" date="2003" name="J. Biotechnol.">
        <title>The complete Corynebacterium glutamicum ATCC 13032 genome sequence and its impact on the production of L-aspartate-derived amino acids and vitamins.</title>
        <authorList>
            <person name="Kalinowski J."/>
            <person name="Bathe B."/>
            <person name="Bartels D."/>
            <person name="Bischoff N."/>
            <person name="Bott M."/>
            <person name="Burkovski A."/>
            <person name="Dusch N."/>
            <person name="Eggeling L."/>
            <person name="Eikmanns B.J."/>
            <person name="Gaigalat L."/>
            <person name="Goesmann A."/>
            <person name="Hartmann M."/>
            <person name="Huthmacher K."/>
            <person name="Kraemer R."/>
            <person name="Linke B."/>
            <person name="McHardy A.C."/>
            <person name="Meyer F."/>
            <person name="Moeckel B."/>
            <person name="Pfefferle W."/>
            <person name="Puehler A."/>
            <person name="Rey D.A."/>
            <person name="Rueckert C."/>
            <person name="Rupp O."/>
            <person name="Sahm H."/>
            <person name="Wendisch V.F."/>
            <person name="Wiegraebe I."/>
            <person name="Tauch A."/>
        </authorList>
    </citation>
    <scope>NUCLEOTIDE SEQUENCE [LARGE SCALE GENOMIC DNA]</scope>
    <source>
        <strain>ATCC 13032 / DSM 20300 / JCM 1318 / BCRC 11384 / CCUG 27702 / LMG 3730 / NBRC 12168 / NCIMB 10025 / NRRL B-2784 / 534</strain>
    </source>
</reference>
<evidence type="ECO:0000255" key="1">
    <source>
        <dbReference type="PROSITE-ProRule" id="PRU00208"/>
    </source>
</evidence>
<evidence type="ECO:0000255" key="2">
    <source>
        <dbReference type="PROSITE-ProRule" id="PRU01024"/>
    </source>
</evidence>
<feature type="chain" id="PRO_0000161976" description="Uncharacterized RNA methyltransferase Cgl1903/cg2084">
    <location>
        <begin position="1"/>
        <end position="412"/>
    </location>
</feature>
<feature type="domain" description="TRAM" evidence="1">
    <location>
        <begin position="6"/>
        <end position="64"/>
    </location>
</feature>
<feature type="active site" description="Nucleophile" evidence="2">
    <location>
        <position position="368"/>
    </location>
</feature>
<feature type="binding site" evidence="2">
    <location>
        <position position="242"/>
    </location>
    <ligand>
        <name>S-adenosyl-L-methionine</name>
        <dbReference type="ChEBI" id="CHEBI:59789"/>
    </ligand>
</feature>
<feature type="binding site" evidence="2">
    <location>
        <position position="278"/>
    </location>
    <ligand>
        <name>S-adenosyl-L-methionine</name>
        <dbReference type="ChEBI" id="CHEBI:59789"/>
    </ligand>
</feature>
<feature type="binding site" evidence="2">
    <location>
        <position position="300"/>
    </location>
    <ligand>
        <name>S-adenosyl-L-methionine</name>
        <dbReference type="ChEBI" id="CHEBI:59789"/>
    </ligand>
</feature>
<feature type="binding site" evidence="2">
    <location>
        <position position="341"/>
    </location>
    <ligand>
        <name>S-adenosyl-L-methionine</name>
        <dbReference type="ChEBI" id="CHEBI:59789"/>
    </ligand>
</feature>
<sequence length="412" mass="44120">MTDTVELAKGDIISVEVLRPAHGGEGIGHHDGRVIFVKGGIPGDVVDVEIAQLKKKWARGEVVKVTTASADRVDSRCPAAAAGAGCCDYAELNPTVELEIKSRVLRDQLERIGGIDELPEFELQDLEPTAGWRTRVRLGVDASGRAGFRKLKSNELVTEVACSQVVPELLEGLVGEGARRFTPGVEIIAAIDDAGQRHVVESRKAPRGRRTETVLKVLEGTGEVEQKVGDYTWKFPVSSFWQAHTKAPAAYSEFIAEALTGLELVDVDKRGPVAWDLYGGVGLFAPIITSKLQAAVHSVELSPGSAEAGEEALAGLPVTFHTGRVEGMASQLPSPNVVVLDPPRTGAGSDVLKSIAEAKPQLVIHIGCDPATFARDVADWKLNGYEMDQLAVFNAFPGTHHFETIGVFVRVS</sequence>
<proteinExistence type="inferred from homology"/>
<dbReference type="EC" id="2.1.1.-"/>
<dbReference type="EMBL" id="BA000036">
    <property type="protein sequence ID" value="BAB99296.1"/>
    <property type="molecule type" value="Genomic_DNA"/>
</dbReference>
<dbReference type="EMBL" id="BX927153">
    <property type="protein sequence ID" value="CAF20243.1"/>
    <property type="molecule type" value="Genomic_DNA"/>
</dbReference>
<dbReference type="RefSeq" id="NP_601109.1">
    <property type="nucleotide sequence ID" value="NC_003450.3"/>
</dbReference>
<dbReference type="RefSeq" id="WP_011014742.1">
    <property type="nucleotide sequence ID" value="NC_006958.1"/>
</dbReference>
<dbReference type="SMR" id="Q6M4B7"/>
<dbReference type="STRING" id="196627.cg2084"/>
<dbReference type="KEGG" id="cgb:cg2084"/>
<dbReference type="KEGG" id="cgl:Cgl1903"/>
<dbReference type="PATRIC" id="fig|196627.13.peg.1840"/>
<dbReference type="eggNOG" id="COG2265">
    <property type="taxonomic scope" value="Bacteria"/>
</dbReference>
<dbReference type="HOGENOM" id="CLU_014689_7_0_11"/>
<dbReference type="OrthoDB" id="9804590at2"/>
<dbReference type="BioCyc" id="CORYNE:G18NG-11495-MONOMER"/>
<dbReference type="Proteomes" id="UP000000582">
    <property type="component" value="Chromosome"/>
</dbReference>
<dbReference type="Proteomes" id="UP000001009">
    <property type="component" value="Chromosome"/>
</dbReference>
<dbReference type="GO" id="GO:0070041">
    <property type="term" value="F:rRNA (uridine-C5-)-methyltransferase activity"/>
    <property type="evidence" value="ECO:0007669"/>
    <property type="project" value="TreeGrafter"/>
</dbReference>
<dbReference type="GO" id="GO:0070475">
    <property type="term" value="P:rRNA base methylation"/>
    <property type="evidence" value="ECO:0007669"/>
    <property type="project" value="TreeGrafter"/>
</dbReference>
<dbReference type="Gene3D" id="2.40.50.140">
    <property type="entry name" value="Nucleic acid-binding proteins"/>
    <property type="match status" value="1"/>
</dbReference>
<dbReference type="Gene3D" id="3.40.50.150">
    <property type="entry name" value="Vaccinia Virus protein VP39"/>
    <property type="match status" value="1"/>
</dbReference>
<dbReference type="InterPro" id="IPR030390">
    <property type="entry name" value="MeTrfase_TrmA_AS"/>
</dbReference>
<dbReference type="InterPro" id="IPR012340">
    <property type="entry name" value="NA-bd_OB-fold"/>
</dbReference>
<dbReference type="InterPro" id="IPR029063">
    <property type="entry name" value="SAM-dependent_MTases_sf"/>
</dbReference>
<dbReference type="InterPro" id="IPR002792">
    <property type="entry name" value="TRAM_dom"/>
</dbReference>
<dbReference type="InterPro" id="IPR010280">
    <property type="entry name" value="U5_MeTrfase_fam"/>
</dbReference>
<dbReference type="PANTHER" id="PTHR11061">
    <property type="entry name" value="RNA M5U METHYLTRANSFERASE"/>
    <property type="match status" value="1"/>
</dbReference>
<dbReference type="PANTHER" id="PTHR11061:SF30">
    <property type="entry name" value="TRNA (URACIL(54)-C(5))-METHYLTRANSFERASE"/>
    <property type="match status" value="1"/>
</dbReference>
<dbReference type="Pfam" id="PF01938">
    <property type="entry name" value="TRAM"/>
    <property type="match status" value="1"/>
</dbReference>
<dbReference type="Pfam" id="PF05958">
    <property type="entry name" value="tRNA_U5-meth_tr"/>
    <property type="match status" value="1"/>
</dbReference>
<dbReference type="SUPFAM" id="SSF50249">
    <property type="entry name" value="Nucleic acid-binding proteins"/>
    <property type="match status" value="1"/>
</dbReference>
<dbReference type="SUPFAM" id="SSF53335">
    <property type="entry name" value="S-adenosyl-L-methionine-dependent methyltransferases"/>
    <property type="match status" value="1"/>
</dbReference>
<dbReference type="PROSITE" id="PS51687">
    <property type="entry name" value="SAM_MT_RNA_M5U"/>
    <property type="match status" value="1"/>
</dbReference>
<dbReference type="PROSITE" id="PS50926">
    <property type="entry name" value="TRAM"/>
    <property type="match status" value="1"/>
</dbReference>
<dbReference type="PROSITE" id="PS01230">
    <property type="entry name" value="TRMA_1"/>
    <property type="match status" value="1"/>
</dbReference>
<protein>
    <recommendedName>
        <fullName>Uncharacterized RNA methyltransferase Cgl1903/cg2084</fullName>
        <ecNumber>2.1.1.-</ecNumber>
    </recommendedName>
</protein>